<name>SYA_BURO0</name>
<feature type="chain" id="PRO_0000347523" description="Alanine--tRNA ligase">
    <location>
        <begin position="1"/>
        <end position="874"/>
    </location>
</feature>
<feature type="binding site" evidence="1">
    <location>
        <position position="564"/>
    </location>
    <ligand>
        <name>Zn(2+)</name>
        <dbReference type="ChEBI" id="CHEBI:29105"/>
    </ligand>
</feature>
<feature type="binding site" evidence="1">
    <location>
        <position position="568"/>
    </location>
    <ligand>
        <name>Zn(2+)</name>
        <dbReference type="ChEBI" id="CHEBI:29105"/>
    </ligand>
</feature>
<feature type="binding site" evidence="1">
    <location>
        <position position="665"/>
    </location>
    <ligand>
        <name>Zn(2+)</name>
        <dbReference type="ChEBI" id="CHEBI:29105"/>
    </ligand>
</feature>
<feature type="binding site" evidence="1">
    <location>
        <position position="669"/>
    </location>
    <ligand>
        <name>Zn(2+)</name>
        <dbReference type="ChEBI" id="CHEBI:29105"/>
    </ligand>
</feature>
<accession>B1K026</accession>
<keyword id="KW-0030">Aminoacyl-tRNA synthetase</keyword>
<keyword id="KW-0067">ATP-binding</keyword>
<keyword id="KW-0963">Cytoplasm</keyword>
<keyword id="KW-0436">Ligase</keyword>
<keyword id="KW-0479">Metal-binding</keyword>
<keyword id="KW-0547">Nucleotide-binding</keyword>
<keyword id="KW-0648">Protein biosynthesis</keyword>
<keyword id="KW-0694">RNA-binding</keyword>
<keyword id="KW-0820">tRNA-binding</keyword>
<keyword id="KW-0862">Zinc</keyword>
<dbReference type="EC" id="6.1.1.7" evidence="1"/>
<dbReference type="EMBL" id="CP000958">
    <property type="protein sequence ID" value="ACA90562.1"/>
    <property type="molecule type" value="Genomic_DNA"/>
</dbReference>
<dbReference type="RefSeq" id="WP_012328333.1">
    <property type="nucleotide sequence ID" value="NC_010508.1"/>
</dbReference>
<dbReference type="SMR" id="B1K026"/>
<dbReference type="GeneID" id="83048183"/>
<dbReference type="KEGG" id="bcm:Bcenmc03_1387"/>
<dbReference type="HOGENOM" id="CLU_004485_1_1_4"/>
<dbReference type="Proteomes" id="UP000002169">
    <property type="component" value="Chromosome 1"/>
</dbReference>
<dbReference type="GO" id="GO:0005829">
    <property type="term" value="C:cytosol"/>
    <property type="evidence" value="ECO:0007669"/>
    <property type="project" value="TreeGrafter"/>
</dbReference>
<dbReference type="GO" id="GO:0004813">
    <property type="term" value="F:alanine-tRNA ligase activity"/>
    <property type="evidence" value="ECO:0007669"/>
    <property type="project" value="UniProtKB-UniRule"/>
</dbReference>
<dbReference type="GO" id="GO:0002161">
    <property type="term" value="F:aminoacyl-tRNA deacylase activity"/>
    <property type="evidence" value="ECO:0007669"/>
    <property type="project" value="TreeGrafter"/>
</dbReference>
<dbReference type="GO" id="GO:0005524">
    <property type="term" value="F:ATP binding"/>
    <property type="evidence" value="ECO:0007669"/>
    <property type="project" value="UniProtKB-UniRule"/>
</dbReference>
<dbReference type="GO" id="GO:0000049">
    <property type="term" value="F:tRNA binding"/>
    <property type="evidence" value="ECO:0007669"/>
    <property type="project" value="UniProtKB-KW"/>
</dbReference>
<dbReference type="GO" id="GO:0008270">
    <property type="term" value="F:zinc ion binding"/>
    <property type="evidence" value="ECO:0007669"/>
    <property type="project" value="UniProtKB-UniRule"/>
</dbReference>
<dbReference type="GO" id="GO:0006419">
    <property type="term" value="P:alanyl-tRNA aminoacylation"/>
    <property type="evidence" value="ECO:0007669"/>
    <property type="project" value="UniProtKB-UniRule"/>
</dbReference>
<dbReference type="GO" id="GO:0045892">
    <property type="term" value="P:negative regulation of DNA-templated transcription"/>
    <property type="evidence" value="ECO:0007669"/>
    <property type="project" value="TreeGrafter"/>
</dbReference>
<dbReference type="CDD" id="cd00673">
    <property type="entry name" value="AlaRS_core"/>
    <property type="match status" value="1"/>
</dbReference>
<dbReference type="FunFam" id="2.40.30.130:FF:000001">
    <property type="entry name" value="Alanine--tRNA ligase"/>
    <property type="match status" value="1"/>
</dbReference>
<dbReference type="FunFam" id="3.10.310.40:FF:000001">
    <property type="entry name" value="Alanine--tRNA ligase"/>
    <property type="match status" value="1"/>
</dbReference>
<dbReference type="FunFam" id="3.30.54.20:FF:000001">
    <property type="entry name" value="Alanine--tRNA ligase"/>
    <property type="match status" value="1"/>
</dbReference>
<dbReference type="FunFam" id="3.30.930.10:FF:000004">
    <property type="entry name" value="Alanine--tRNA ligase"/>
    <property type="match status" value="1"/>
</dbReference>
<dbReference type="FunFam" id="3.30.980.10:FF:000004">
    <property type="entry name" value="Alanine--tRNA ligase, cytoplasmic"/>
    <property type="match status" value="1"/>
</dbReference>
<dbReference type="Gene3D" id="2.40.30.130">
    <property type="match status" value="1"/>
</dbReference>
<dbReference type="Gene3D" id="3.10.310.40">
    <property type="match status" value="1"/>
</dbReference>
<dbReference type="Gene3D" id="3.30.54.20">
    <property type="match status" value="1"/>
</dbReference>
<dbReference type="Gene3D" id="6.10.250.550">
    <property type="match status" value="1"/>
</dbReference>
<dbReference type="Gene3D" id="3.30.930.10">
    <property type="entry name" value="Bira Bifunctional Protein, Domain 2"/>
    <property type="match status" value="1"/>
</dbReference>
<dbReference type="Gene3D" id="3.30.980.10">
    <property type="entry name" value="Threonyl-trna Synthetase, Chain A, domain 2"/>
    <property type="match status" value="1"/>
</dbReference>
<dbReference type="HAMAP" id="MF_00036_B">
    <property type="entry name" value="Ala_tRNA_synth_B"/>
    <property type="match status" value="1"/>
</dbReference>
<dbReference type="InterPro" id="IPR045864">
    <property type="entry name" value="aa-tRNA-synth_II/BPL/LPL"/>
</dbReference>
<dbReference type="InterPro" id="IPR002318">
    <property type="entry name" value="Ala-tRNA-lgiase_IIc"/>
</dbReference>
<dbReference type="InterPro" id="IPR018162">
    <property type="entry name" value="Ala-tRNA-ligase_IIc_anticod-bd"/>
</dbReference>
<dbReference type="InterPro" id="IPR018165">
    <property type="entry name" value="Ala-tRNA-synth_IIc_core"/>
</dbReference>
<dbReference type="InterPro" id="IPR018164">
    <property type="entry name" value="Ala-tRNA-synth_IIc_N"/>
</dbReference>
<dbReference type="InterPro" id="IPR050058">
    <property type="entry name" value="Ala-tRNA_ligase"/>
</dbReference>
<dbReference type="InterPro" id="IPR023033">
    <property type="entry name" value="Ala_tRNA_ligase_euk/bac"/>
</dbReference>
<dbReference type="InterPro" id="IPR003156">
    <property type="entry name" value="DHHA1_dom"/>
</dbReference>
<dbReference type="InterPro" id="IPR018163">
    <property type="entry name" value="Thr/Ala-tRNA-synth_IIc_edit"/>
</dbReference>
<dbReference type="InterPro" id="IPR009000">
    <property type="entry name" value="Transl_B-barrel_sf"/>
</dbReference>
<dbReference type="InterPro" id="IPR012947">
    <property type="entry name" value="tRNA_SAD"/>
</dbReference>
<dbReference type="NCBIfam" id="TIGR00344">
    <property type="entry name" value="alaS"/>
    <property type="match status" value="1"/>
</dbReference>
<dbReference type="PANTHER" id="PTHR11777:SF9">
    <property type="entry name" value="ALANINE--TRNA LIGASE, CYTOPLASMIC"/>
    <property type="match status" value="1"/>
</dbReference>
<dbReference type="PANTHER" id="PTHR11777">
    <property type="entry name" value="ALANYL-TRNA SYNTHETASE"/>
    <property type="match status" value="1"/>
</dbReference>
<dbReference type="Pfam" id="PF02272">
    <property type="entry name" value="DHHA1"/>
    <property type="match status" value="1"/>
</dbReference>
<dbReference type="Pfam" id="PF01411">
    <property type="entry name" value="tRNA-synt_2c"/>
    <property type="match status" value="1"/>
</dbReference>
<dbReference type="Pfam" id="PF07973">
    <property type="entry name" value="tRNA_SAD"/>
    <property type="match status" value="1"/>
</dbReference>
<dbReference type="PRINTS" id="PR00980">
    <property type="entry name" value="TRNASYNTHALA"/>
</dbReference>
<dbReference type="SMART" id="SM00863">
    <property type="entry name" value="tRNA_SAD"/>
    <property type="match status" value="1"/>
</dbReference>
<dbReference type="SUPFAM" id="SSF55681">
    <property type="entry name" value="Class II aaRS and biotin synthetases"/>
    <property type="match status" value="1"/>
</dbReference>
<dbReference type="SUPFAM" id="SSF101353">
    <property type="entry name" value="Putative anticodon-binding domain of alanyl-tRNA synthetase (AlaRS)"/>
    <property type="match status" value="1"/>
</dbReference>
<dbReference type="SUPFAM" id="SSF55186">
    <property type="entry name" value="ThrRS/AlaRS common domain"/>
    <property type="match status" value="1"/>
</dbReference>
<dbReference type="SUPFAM" id="SSF50447">
    <property type="entry name" value="Translation proteins"/>
    <property type="match status" value="1"/>
</dbReference>
<dbReference type="PROSITE" id="PS50860">
    <property type="entry name" value="AA_TRNA_LIGASE_II_ALA"/>
    <property type="match status" value="1"/>
</dbReference>
<sequence length="874" mass="95484">MKAAEIREKFLKFFESKGHTIVRSSSLVPGNDPTLMFTNSGMVQFKDVFLGTDPRPYSRATTAQRSVRAGGKHNDLENVGYTARHHTFFEMLGNFSFGDYFKHDAIKFAWELLTTVYQLPKDKLWVTVYQEDDEAYDIWAKEVGVPTERIIRIGDNKGARYASDNFWTMGDTGPCGPCTEIFYDHGPDVWGGPPGSPEEDGDRYIEIWNLVFMQFNRDAQGNMTRLPKQSVDTGMGLERLAAVLQHVHSNYEIDLFQNLIKAAARVTEISDLTNNSLKVIADHIRACSFLIVDGVIPGNEGRGYVLRRIVRRAIRHGYKLGRKGAFFHKLVADLVAEMGTAYPELKEAEQRVTDVLRQEEERFFETIEHGMSILEAALADVEAKGGKVLDGELAFKLHDTYGFPLDLTADVCRERGMTVDEPAFDDAMARQREQARAAGKFKATQGLEYSGAKTTFHGYEEIAFDDAKVVALYVDGSAVNEVKAGQDAVVVLDHTPFYAESGGQVGDQGVLANAATRFAVADTLKVQADVIGHHGTLEQGTLKVGDVLRAEIDAQRRARTQRNHSATHLMHKALREVLGAHVQQKGSLVDADKTRFDFAHNAPMTDDEIRRVEQIVNDEILANAPGIVRVMPYDEAVKGGAMALFGEKYGDEVRVLDLGFSRELCGGTHVHRTGDIGLFKIVVEGGVAAGIRRVEAITGDNAVRYVQELDARVNEAAAALKAQPSELTQRIAQVQEQVKSLEKELGALKSKLASSQGDELAQQAVEIGGVYVLAATLDGADAKTLRETVDKLKDKLKSAAIVLAAVEGGKVSLIAGVTPDASKKVKAGELVNFVAQQVGGKGGGRPDMAQAGGTEPANLPGALAGVKGWVEERL</sequence>
<proteinExistence type="inferred from homology"/>
<evidence type="ECO:0000255" key="1">
    <source>
        <dbReference type="HAMAP-Rule" id="MF_00036"/>
    </source>
</evidence>
<protein>
    <recommendedName>
        <fullName evidence="1">Alanine--tRNA ligase</fullName>
        <ecNumber evidence="1">6.1.1.7</ecNumber>
    </recommendedName>
    <alternativeName>
        <fullName evidence="1">Alanyl-tRNA synthetase</fullName>
        <shortName evidence="1">AlaRS</shortName>
    </alternativeName>
</protein>
<organism>
    <name type="scientific">Burkholderia orbicola (strain MC0-3)</name>
    <dbReference type="NCBI Taxonomy" id="406425"/>
    <lineage>
        <taxon>Bacteria</taxon>
        <taxon>Pseudomonadati</taxon>
        <taxon>Pseudomonadota</taxon>
        <taxon>Betaproteobacteria</taxon>
        <taxon>Burkholderiales</taxon>
        <taxon>Burkholderiaceae</taxon>
        <taxon>Burkholderia</taxon>
        <taxon>Burkholderia cepacia complex</taxon>
        <taxon>Burkholderia orbicola</taxon>
    </lineage>
</organism>
<gene>
    <name evidence="1" type="primary">alaS</name>
    <name type="ordered locus">Bcenmc03_1387</name>
</gene>
<reference key="1">
    <citation type="submission" date="2008-02" db="EMBL/GenBank/DDBJ databases">
        <title>Complete sequence of chromosome 1 of Burkholderia cenocepacia MC0-3.</title>
        <authorList>
            <person name="Copeland A."/>
            <person name="Lucas S."/>
            <person name="Lapidus A."/>
            <person name="Barry K."/>
            <person name="Bruce D."/>
            <person name="Goodwin L."/>
            <person name="Glavina del Rio T."/>
            <person name="Dalin E."/>
            <person name="Tice H."/>
            <person name="Pitluck S."/>
            <person name="Chain P."/>
            <person name="Malfatti S."/>
            <person name="Shin M."/>
            <person name="Vergez L."/>
            <person name="Schmutz J."/>
            <person name="Larimer F."/>
            <person name="Land M."/>
            <person name="Hauser L."/>
            <person name="Kyrpides N."/>
            <person name="Mikhailova N."/>
            <person name="Tiedje J."/>
            <person name="Richardson P."/>
        </authorList>
    </citation>
    <scope>NUCLEOTIDE SEQUENCE [LARGE SCALE GENOMIC DNA]</scope>
    <source>
        <strain>MC0-3</strain>
    </source>
</reference>
<comment type="function">
    <text evidence="1">Catalyzes the attachment of alanine to tRNA(Ala) in a two-step reaction: alanine is first activated by ATP to form Ala-AMP and then transferred to the acceptor end of tRNA(Ala). Also edits incorrectly charged Ser-tRNA(Ala) and Gly-tRNA(Ala) via its editing domain.</text>
</comment>
<comment type="catalytic activity">
    <reaction evidence="1">
        <text>tRNA(Ala) + L-alanine + ATP = L-alanyl-tRNA(Ala) + AMP + diphosphate</text>
        <dbReference type="Rhea" id="RHEA:12540"/>
        <dbReference type="Rhea" id="RHEA-COMP:9657"/>
        <dbReference type="Rhea" id="RHEA-COMP:9923"/>
        <dbReference type="ChEBI" id="CHEBI:30616"/>
        <dbReference type="ChEBI" id="CHEBI:33019"/>
        <dbReference type="ChEBI" id="CHEBI:57972"/>
        <dbReference type="ChEBI" id="CHEBI:78442"/>
        <dbReference type="ChEBI" id="CHEBI:78497"/>
        <dbReference type="ChEBI" id="CHEBI:456215"/>
        <dbReference type="EC" id="6.1.1.7"/>
    </reaction>
</comment>
<comment type="cofactor">
    <cofactor evidence="1">
        <name>Zn(2+)</name>
        <dbReference type="ChEBI" id="CHEBI:29105"/>
    </cofactor>
    <text evidence="1">Binds 1 zinc ion per subunit.</text>
</comment>
<comment type="subcellular location">
    <subcellularLocation>
        <location evidence="1">Cytoplasm</location>
    </subcellularLocation>
</comment>
<comment type="domain">
    <text evidence="1">Consists of three domains; the N-terminal catalytic domain, the editing domain and the C-terminal C-Ala domain. The editing domain removes incorrectly charged amino acids, while the C-Ala domain, along with tRNA(Ala), serves as a bridge to cooperatively bring together the editing and aminoacylation centers thus stimulating deacylation of misacylated tRNAs.</text>
</comment>
<comment type="similarity">
    <text evidence="1">Belongs to the class-II aminoacyl-tRNA synthetase family.</text>
</comment>